<reference key="1">
    <citation type="journal article" date="2005" name="Nucleic Acids Res.">
        <title>The genome sequence of Salmonella enterica serovar Choleraesuis, a highly invasive and resistant zoonotic pathogen.</title>
        <authorList>
            <person name="Chiu C.-H."/>
            <person name="Tang P."/>
            <person name="Chu C."/>
            <person name="Hu S."/>
            <person name="Bao Q."/>
            <person name="Yu J."/>
            <person name="Chou Y.-Y."/>
            <person name="Wang H.-S."/>
            <person name="Lee Y.-S."/>
        </authorList>
    </citation>
    <scope>NUCLEOTIDE SEQUENCE [LARGE SCALE GENOMIC DNA]</scope>
    <source>
        <strain>SC-B67</strain>
    </source>
</reference>
<feature type="chain" id="PRO_0000229079" description="1-(5-phosphoribosyl)-5-[(5-phosphoribosylamino)methylideneamino] imidazole-4-carboxamide isomerase">
    <location>
        <begin position="1"/>
        <end position="245"/>
    </location>
</feature>
<feature type="active site" description="Proton acceptor" evidence="1">
    <location>
        <position position="7"/>
    </location>
</feature>
<feature type="active site" description="Proton donor" evidence="1">
    <location>
        <position position="129"/>
    </location>
</feature>
<comment type="catalytic activity">
    <reaction evidence="1">
        <text>1-(5-phospho-beta-D-ribosyl)-5-[(5-phospho-beta-D-ribosylamino)methylideneamino]imidazole-4-carboxamide = 5-[(5-phospho-1-deoxy-D-ribulos-1-ylimino)methylamino]-1-(5-phospho-beta-D-ribosyl)imidazole-4-carboxamide</text>
        <dbReference type="Rhea" id="RHEA:15469"/>
        <dbReference type="ChEBI" id="CHEBI:58435"/>
        <dbReference type="ChEBI" id="CHEBI:58525"/>
        <dbReference type="EC" id="5.3.1.16"/>
    </reaction>
</comment>
<comment type="pathway">
    <text evidence="1">Amino-acid biosynthesis; L-histidine biosynthesis; L-histidine from 5-phospho-alpha-D-ribose 1-diphosphate: step 4/9.</text>
</comment>
<comment type="subcellular location">
    <subcellularLocation>
        <location evidence="1">Cytoplasm</location>
    </subcellularLocation>
</comment>
<comment type="similarity">
    <text evidence="1">Belongs to the HisA/HisF family.</text>
</comment>
<accession>Q57MR9</accession>
<evidence type="ECO:0000255" key="1">
    <source>
        <dbReference type="HAMAP-Rule" id="MF_01014"/>
    </source>
</evidence>
<proteinExistence type="inferred from homology"/>
<gene>
    <name evidence="1" type="primary">hisA</name>
    <name type="ordered locus">SCH_2086</name>
</gene>
<keyword id="KW-0028">Amino-acid biosynthesis</keyword>
<keyword id="KW-0963">Cytoplasm</keyword>
<keyword id="KW-0368">Histidine biosynthesis</keyword>
<keyword id="KW-0413">Isomerase</keyword>
<protein>
    <recommendedName>
        <fullName evidence="1">1-(5-phosphoribosyl)-5-[(5-phosphoribosylamino)methylideneamino] imidazole-4-carboxamide isomerase</fullName>
        <ecNumber evidence="1">5.3.1.16</ecNumber>
    </recommendedName>
    <alternativeName>
        <fullName evidence="1">Phosphoribosylformimino-5-aminoimidazole carboxamide ribotide isomerase</fullName>
    </alternativeName>
</protein>
<sequence length="245" mass="26115">MIIPALDLIDGTVVRLHQGDYARQREYGNDPLPRLQDYAAQGAGVLHLVDLTGAKDPAKRQIPLIKTLVAGVNVPVQVGGGVRTEEDVAALLKAGVARVVIGSTAVKSPDVVKGWFERFGAQALVLALDVRIDEHGNKQVAVSGWQENSGVSLEQLVETYLPVGLKHVLCTDISRDGTLAGSNVSLYEEVCARYPQIAFQSSGGIGNIDDIAALRGTGVRGVIVGRALLEGKFTVKEAIQCWQNV</sequence>
<dbReference type="EC" id="5.3.1.16" evidence="1"/>
<dbReference type="EMBL" id="AE017220">
    <property type="protein sequence ID" value="AAX65992.1"/>
    <property type="molecule type" value="Genomic_DNA"/>
</dbReference>
<dbReference type="RefSeq" id="WP_000586412.1">
    <property type="nucleotide sequence ID" value="NC_006905.1"/>
</dbReference>
<dbReference type="SMR" id="Q57MR9"/>
<dbReference type="KEGG" id="sec:SCH_2086"/>
<dbReference type="HOGENOM" id="CLU_048577_1_2_6"/>
<dbReference type="UniPathway" id="UPA00031">
    <property type="reaction ID" value="UER00009"/>
</dbReference>
<dbReference type="Proteomes" id="UP000000538">
    <property type="component" value="Chromosome"/>
</dbReference>
<dbReference type="GO" id="GO:0005737">
    <property type="term" value="C:cytoplasm"/>
    <property type="evidence" value="ECO:0007669"/>
    <property type="project" value="UniProtKB-SubCell"/>
</dbReference>
<dbReference type="GO" id="GO:0003949">
    <property type="term" value="F:1-(5-phosphoribosyl)-5-[(5-phosphoribosylamino)methylideneamino]imidazole-4-carboxamide isomerase activity"/>
    <property type="evidence" value="ECO:0007669"/>
    <property type="project" value="UniProtKB-UniRule"/>
</dbReference>
<dbReference type="GO" id="GO:0000105">
    <property type="term" value="P:L-histidine biosynthetic process"/>
    <property type="evidence" value="ECO:0007669"/>
    <property type="project" value="UniProtKB-UniRule"/>
</dbReference>
<dbReference type="GO" id="GO:0000162">
    <property type="term" value="P:L-tryptophan biosynthetic process"/>
    <property type="evidence" value="ECO:0007669"/>
    <property type="project" value="TreeGrafter"/>
</dbReference>
<dbReference type="CDD" id="cd04732">
    <property type="entry name" value="HisA"/>
    <property type="match status" value="1"/>
</dbReference>
<dbReference type="FunFam" id="3.20.20.70:FF:000009">
    <property type="entry name" value="1-(5-phosphoribosyl)-5-[(5-phosphoribosylamino)methylideneamino] imidazole-4-carboxamide isomerase"/>
    <property type="match status" value="1"/>
</dbReference>
<dbReference type="Gene3D" id="3.20.20.70">
    <property type="entry name" value="Aldolase class I"/>
    <property type="match status" value="1"/>
</dbReference>
<dbReference type="HAMAP" id="MF_01014">
    <property type="entry name" value="HisA"/>
    <property type="match status" value="1"/>
</dbReference>
<dbReference type="InterPro" id="IPR013785">
    <property type="entry name" value="Aldolase_TIM"/>
</dbReference>
<dbReference type="InterPro" id="IPR006062">
    <property type="entry name" value="His_biosynth"/>
</dbReference>
<dbReference type="InterPro" id="IPR006063">
    <property type="entry name" value="HisA_bact_arch"/>
</dbReference>
<dbReference type="InterPro" id="IPR044524">
    <property type="entry name" value="Isoase_HisA-like"/>
</dbReference>
<dbReference type="InterPro" id="IPR023016">
    <property type="entry name" value="Isoase_HisA-like_bact"/>
</dbReference>
<dbReference type="InterPro" id="IPR011060">
    <property type="entry name" value="RibuloseP-bd_barrel"/>
</dbReference>
<dbReference type="NCBIfam" id="TIGR00007">
    <property type="entry name" value="1-(5-phosphoribosyl)-5-[(5-phosphoribosylamino)methylideneamino]imidazole-4-carboxamide isomerase"/>
    <property type="match status" value="1"/>
</dbReference>
<dbReference type="PANTHER" id="PTHR43090">
    <property type="entry name" value="1-(5-PHOSPHORIBOSYL)-5-[(5-PHOSPHORIBOSYLAMINO)METHYLIDENEAMINO] IMIDAZOLE-4-CARBOXAMIDE ISOMERASE"/>
    <property type="match status" value="1"/>
</dbReference>
<dbReference type="PANTHER" id="PTHR43090:SF2">
    <property type="entry name" value="1-(5-PHOSPHORIBOSYL)-5-[(5-PHOSPHORIBOSYLAMINO)METHYLIDENEAMINO] IMIDAZOLE-4-CARBOXAMIDE ISOMERASE"/>
    <property type="match status" value="1"/>
</dbReference>
<dbReference type="Pfam" id="PF00977">
    <property type="entry name" value="His_biosynth"/>
    <property type="match status" value="1"/>
</dbReference>
<dbReference type="SUPFAM" id="SSF51366">
    <property type="entry name" value="Ribulose-phoshate binding barrel"/>
    <property type="match status" value="1"/>
</dbReference>
<organism>
    <name type="scientific">Salmonella choleraesuis (strain SC-B67)</name>
    <dbReference type="NCBI Taxonomy" id="321314"/>
    <lineage>
        <taxon>Bacteria</taxon>
        <taxon>Pseudomonadati</taxon>
        <taxon>Pseudomonadota</taxon>
        <taxon>Gammaproteobacteria</taxon>
        <taxon>Enterobacterales</taxon>
        <taxon>Enterobacteriaceae</taxon>
        <taxon>Salmonella</taxon>
    </lineage>
</organism>
<name>HIS4_SALCH</name>